<keyword id="KW-0963">Cytoplasm</keyword>
<keyword id="KW-0324">Glycolysis</keyword>
<keyword id="KW-0456">Lyase</keyword>
<keyword id="KW-0460">Magnesium</keyword>
<keyword id="KW-0479">Metal-binding</keyword>
<keyword id="KW-0964">Secreted</keyword>
<protein>
    <recommendedName>
        <fullName evidence="1">Enolase</fullName>
        <ecNumber evidence="1">4.2.1.11</ecNumber>
    </recommendedName>
    <alternativeName>
        <fullName evidence="1">2-phospho-D-glycerate hydro-lyase</fullName>
    </alternativeName>
    <alternativeName>
        <fullName evidence="1">2-phosphoglycerate dehydratase</fullName>
    </alternativeName>
</protein>
<gene>
    <name evidence="1" type="primary">eno</name>
    <name type="ordered locus">A2cp1_2305</name>
</gene>
<name>ENO_ANAD2</name>
<reference key="1">
    <citation type="submission" date="2009-01" db="EMBL/GenBank/DDBJ databases">
        <title>Complete sequence of Anaeromyxobacter dehalogenans 2CP-1.</title>
        <authorList>
            <person name="Lucas S."/>
            <person name="Copeland A."/>
            <person name="Lapidus A."/>
            <person name="Glavina del Rio T."/>
            <person name="Dalin E."/>
            <person name="Tice H."/>
            <person name="Bruce D."/>
            <person name="Goodwin L."/>
            <person name="Pitluck S."/>
            <person name="Saunders E."/>
            <person name="Brettin T."/>
            <person name="Detter J.C."/>
            <person name="Han C."/>
            <person name="Larimer F."/>
            <person name="Land M."/>
            <person name="Hauser L."/>
            <person name="Kyrpides N."/>
            <person name="Ovchinnikova G."/>
            <person name="Beliaev A.S."/>
            <person name="Richardson P."/>
        </authorList>
    </citation>
    <scope>NUCLEOTIDE SEQUENCE [LARGE SCALE GENOMIC DNA]</scope>
    <source>
        <strain>2CP-1 / ATCC BAA-258</strain>
    </source>
</reference>
<organism>
    <name type="scientific">Anaeromyxobacter dehalogenans (strain 2CP-1 / ATCC BAA-258)</name>
    <dbReference type="NCBI Taxonomy" id="455488"/>
    <lineage>
        <taxon>Bacteria</taxon>
        <taxon>Pseudomonadati</taxon>
        <taxon>Myxococcota</taxon>
        <taxon>Myxococcia</taxon>
        <taxon>Myxococcales</taxon>
        <taxon>Cystobacterineae</taxon>
        <taxon>Anaeromyxobacteraceae</taxon>
        <taxon>Anaeromyxobacter</taxon>
    </lineage>
</organism>
<proteinExistence type="inferred from homology"/>
<evidence type="ECO:0000255" key="1">
    <source>
        <dbReference type="HAMAP-Rule" id="MF_00318"/>
    </source>
</evidence>
<sequence length="429" mass="45008">MTEIINVTAREILDSRGNPTVEVEVAVGTGDVGRAAVPSGASTGEHEALELRDGDKGRYLGKGVRKAVANVIDEIAPAVVGLDASDQASLDARMIALDGTPTKSKLGANAILGVSLAAAKAAATAHGLPLYRYVGGAGARTLPVPLMNILNGGAHADSNVDIQEFMVVPLGLPTFAEALRCGAEIFHALKKVLKGKGAATGVGDEGGYAPSLASNEEALAVIMEAIGQAGYEPGKQVALALDCAASEFYDKKAGKYELEGEGKRFDGKGLVEYYAQLAAKYPIVSIEDGCDEDDWATWKLLTERLGGKLQLVGDDLFVTNVTRLARGIEQGVTNSILVKVNQIGSLTETLEAVRMAHRAGYTTVMSHRSGETEDTTIADLAVACDCGQIKTGSASRTDRIAKYNQLLRIEEELGGSGRYAGRSAFKALR</sequence>
<accession>B8JAC4</accession>
<feature type="chain" id="PRO_1000132978" description="Enolase">
    <location>
        <begin position="1"/>
        <end position="429"/>
    </location>
</feature>
<feature type="active site" description="Proton donor" evidence="1">
    <location>
        <position position="205"/>
    </location>
</feature>
<feature type="active site" description="Proton acceptor" evidence="1">
    <location>
        <position position="339"/>
    </location>
</feature>
<feature type="binding site" evidence="1">
    <location>
        <position position="163"/>
    </location>
    <ligand>
        <name>(2R)-2-phosphoglycerate</name>
        <dbReference type="ChEBI" id="CHEBI:58289"/>
    </ligand>
</feature>
<feature type="binding site" evidence="1">
    <location>
        <position position="242"/>
    </location>
    <ligand>
        <name>Mg(2+)</name>
        <dbReference type="ChEBI" id="CHEBI:18420"/>
    </ligand>
</feature>
<feature type="binding site" evidence="1">
    <location>
        <position position="287"/>
    </location>
    <ligand>
        <name>Mg(2+)</name>
        <dbReference type="ChEBI" id="CHEBI:18420"/>
    </ligand>
</feature>
<feature type="binding site" evidence="1">
    <location>
        <position position="314"/>
    </location>
    <ligand>
        <name>Mg(2+)</name>
        <dbReference type="ChEBI" id="CHEBI:18420"/>
    </ligand>
</feature>
<feature type="binding site" evidence="1">
    <location>
        <position position="339"/>
    </location>
    <ligand>
        <name>(2R)-2-phosphoglycerate</name>
        <dbReference type="ChEBI" id="CHEBI:58289"/>
    </ligand>
</feature>
<feature type="binding site" evidence="1">
    <location>
        <position position="368"/>
    </location>
    <ligand>
        <name>(2R)-2-phosphoglycerate</name>
        <dbReference type="ChEBI" id="CHEBI:58289"/>
    </ligand>
</feature>
<feature type="binding site" evidence="1">
    <location>
        <position position="369"/>
    </location>
    <ligand>
        <name>(2R)-2-phosphoglycerate</name>
        <dbReference type="ChEBI" id="CHEBI:58289"/>
    </ligand>
</feature>
<feature type="binding site" evidence="1">
    <location>
        <position position="390"/>
    </location>
    <ligand>
        <name>(2R)-2-phosphoglycerate</name>
        <dbReference type="ChEBI" id="CHEBI:58289"/>
    </ligand>
</feature>
<dbReference type="EC" id="4.2.1.11" evidence="1"/>
<dbReference type="EMBL" id="CP001359">
    <property type="protein sequence ID" value="ACL65643.1"/>
    <property type="molecule type" value="Genomic_DNA"/>
</dbReference>
<dbReference type="RefSeq" id="WP_012633477.1">
    <property type="nucleotide sequence ID" value="NC_011891.1"/>
</dbReference>
<dbReference type="SMR" id="B8JAC4"/>
<dbReference type="KEGG" id="acp:A2cp1_2305"/>
<dbReference type="HOGENOM" id="CLU_031223_2_1_7"/>
<dbReference type="UniPathway" id="UPA00109">
    <property type="reaction ID" value="UER00187"/>
</dbReference>
<dbReference type="Proteomes" id="UP000007089">
    <property type="component" value="Chromosome"/>
</dbReference>
<dbReference type="GO" id="GO:0009986">
    <property type="term" value="C:cell surface"/>
    <property type="evidence" value="ECO:0007669"/>
    <property type="project" value="UniProtKB-SubCell"/>
</dbReference>
<dbReference type="GO" id="GO:0005576">
    <property type="term" value="C:extracellular region"/>
    <property type="evidence" value="ECO:0007669"/>
    <property type="project" value="UniProtKB-SubCell"/>
</dbReference>
<dbReference type="GO" id="GO:0000015">
    <property type="term" value="C:phosphopyruvate hydratase complex"/>
    <property type="evidence" value="ECO:0007669"/>
    <property type="project" value="InterPro"/>
</dbReference>
<dbReference type="GO" id="GO:0000287">
    <property type="term" value="F:magnesium ion binding"/>
    <property type="evidence" value="ECO:0007669"/>
    <property type="project" value="UniProtKB-UniRule"/>
</dbReference>
<dbReference type="GO" id="GO:0004634">
    <property type="term" value="F:phosphopyruvate hydratase activity"/>
    <property type="evidence" value="ECO:0007669"/>
    <property type="project" value="UniProtKB-UniRule"/>
</dbReference>
<dbReference type="GO" id="GO:0006096">
    <property type="term" value="P:glycolytic process"/>
    <property type="evidence" value="ECO:0007669"/>
    <property type="project" value="UniProtKB-UniRule"/>
</dbReference>
<dbReference type="CDD" id="cd03313">
    <property type="entry name" value="enolase"/>
    <property type="match status" value="1"/>
</dbReference>
<dbReference type="FunFam" id="3.20.20.120:FF:000001">
    <property type="entry name" value="Enolase"/>
    <property type="match status" value="1"/>
</dbReference>
<dbReference type="FunFam" id="3.30.390.10:FF:000001">
    <property type="entry name" value="Enolase"/>
    <property type="match status" value="1"/>
</dbReference>
<dbReference type="Gene3D" id="3.20.20.120">
    <property type="entry name" value="Enolase-like C-terminal domain"/>
    <property type="match status" value="1"/>
</dbReference>
<dbReference type="Gene3D" id="3.30.390.10">
    <property type="entry name" value="Enolase-like, N-terminal domain"/>
    <property type="match status" value="1"/>
</dbReference>
<dbReference type="HAMAP" id="MF_00318">
    <property type="entry name" value="Enolase"/>
    <property type="match status" value="1"/>
</dbReference>
<dbReference type="InterPro" id="IPR000941">
    <property type="entry name" value="Enolase"/>
</dbReference>
<dbReference type="InterPro" id="IPR036849">
    <property type="entry name" value="Enolase-like_C_sf"/>
</dbReference>
<dbReference type="InterPro" id="IPR029017">
    <property type="entry name" value="Enolase-like_N"/>
</dbReference>
<dbReference type="InterPro" id="IPR020810">
    <property type="entry name" value="Enolase_C"/>
</dbReference>
<dbReference type="InterPro" id="IPR020809">
    <property type="entry name" value="Enolase_CS"/>
</dbReference>
<dbReference type="InterPro" id="IPR020811">
    <property type="entry name" value="Enolase_N"/>
</dbReference>
<dbReference type="NCBIfam" id="TIGR01060">
    <property type="entry name" value="eno"/>
    <property type="match status" value="1"/>
</dbReference>
<dbReference type="PANTHER" id="PTHR11902">
    <property type="entry name" value="ENOLASE"/>
    <property type="match status" value="1"/>
</dbReference>
<dbReference type="PANTHER" id="PTHR11902:SF1">
    <property type="entry name" value="ENOLASE"/>
    <property type="match status" value="1"/>
</dbReference>
<dbReference type="Pfam" id="PF00113">
    <property type="entry name" value="Enolase_C"/>
    <property type="match status" value="1"/>
</dbReference>
<dbReference type="Pfam" id="PF03952">
    <property type="entry name" value="Enolase_N"/>
    <property type="match status" value="1"/>
</dbReference>
<dbReference type="PIRSF" id="PIRSF001400">
    <property type="entry name" value="Enolase"/>
    <property type="match status" value="1"/>
</dbReference>
<dbReference type="PRINTS" id="PR00148">
    <property type="entry name" value="ENOLASE"/>
</dbReference>
<dbReference type="SFLD" id="SFLDF00002">
    <property type="entry name" value="enolase"/>
    <property type="match status" value="1"/>
</dbReference>
<dbReference type="SFLD" id="SFLDG00178">
    <property type="entry name" value="enolase"/>
    <property type="match status" value="1"/>
</dbReference>
<dbReference type="SMART" id="SM01192">
    <property type="entry name" value="Enolase_C"/>
    <property type="match status" value="1"/>
</dbReference>
<dbReference type="SMART" id="SM01193">
    <property type="entry name" value="Enolase_N"/>
    <property type="match status" value="1"/>
</dbReference>
<dbReference type="SUPFAM" id="SSF51604">
    <property type="entry name" value="Enolase C-terminal domain-like"/>
    <property type="match status" value="1"/>
</dbReference>
<dbReference type="SUPFAM" id="SSF54826">
    <property type="entry name" value="Enolase N-terminal domain-like"/>
    <property type="match status" value="1"/>
</dbReference>
<dbReference type="PROSITE" id="PS00164">
    <property type="entry name" value="ENOLASE"/>
    <property type="match status" value="1"/>
</dbReference>
<comment type="function">
    <text evidence="1">Catalyzes the reversible conversion of 2-phosphoglycerate (2-PG) into phosphoenolpyruvate (PEP). It is essential for the degradation of carbohydrates via glycolysis.</text>
</comment>
<comment type="catalytic activity">
    <reaction evidence="1">
        <text>(2R)-2-phosphoglycerate = phosphoenolpyruvate + H2O</text>
        <dbReference type="Rhea" id="RHEA:10164"/>
        <dbReference type="ChEBI" id="CHEBI:15377"/>
        <dbReference type="ChEBI" id="CHEBI:58289"/>
        <dbReference type="ChEBI" id="CHEBI:58702"/>
        <dbReference type="EC" id="4.2.1.11"/>
    </reaction>
</comment>
<comment type="cofactor">
    <cofactor evidence="1">
        <name>Mg(2+)</name>
        <dbReference type="ChEBI" id="CHEBI:18420"/>
    </cofactor>
    <text evidence="1">Binds a second Mg(2+) ion via substrate during catalysis.</text>
</comment>
<comment type="pathway">
    <text evidence="1">Carbohydrate degradation; glycolysis; pyruvate from D-glyceraldehyde 3-phosphate: step 4/5.</text>
</comment>
<comment type="subcellular location">
    <subcellularLocation>
        <location evidence="1">Cytoplasm</location>
    </subcellularLocation>
    <subcellularLocation>
        <location evidence="1">Secreted</location>
    </subcellularLocation>
    <subcellularLocation>
        <location evidence="1">Cell surface</location>
    </subcellularLocation>
    <text evidence="1">Fractions of enolase are present in both the cytoplasm and on the cell surface.</text>
</comment>
<comment type="similarity">
    <text evidence="1">Belongs to the enolase family.</text>
</comment>